<proteinExistence type="evidence at transcript level"/>
<organism>
    <name type="scientific">Bovine adenovirus B serotype 3</name>
    <name type="common">BAdV-3</name>
    <name type="synonym">Mastadenovirus bos3</name>
    <dbReference type="NCBI Taxonomy" id="10510"/>
    <lineage>
        <taxon>Viruses</taxon>
        <taxon>Varidnaviria</taxon>
        <taxon>Bamfordvirae</taxon>
        <taxon>Preplasmiviricota</taxon>
        <taxon>Tectiliviricetes</taxon>
        <taxon>Rowavirales</taxon>
        <taxon>Adenoviridae</taxon>
        <taxon>Mastadenovirus</taxon>
        <taxon>Bovine mastadenovirus B</taxon>
    </lineage>
</organism>
<evidence type="ECO:0000250" key="1"/>
<evidence type="ECO:0000250" key="2">
    <source>
        <dbReference type="UniProtKB" id="P24936"/>
    </source>
</evidence>
<evidence type="ECO:0000255" key="3"/>
<evidence type="ECO:0000305" key="4"/>
<gene>
    <name type="ORF">L4</name>
</gene>
<sequence>LIKQPVVGTTHVEMPRNEVLEQHLTSHGAQIAGGGAAGDYFKSPTSARTLIPLTASCLRPDGVFQLGGGSRSSFNPLQTDFAFHALPSRPRHGGIGSRQFVEEFVPAVYLNPYSGPPDSYPDQFIRHYNVYSNSVSGYS</sequence>
<accession>Q03556</accession>
<dbReference type="EMBL" id="D16839">
    <property type="protein sequence ID" value="BAA04113.1"/>
    <property type="molecule type" value="Genomic_DNA"/>
</dbReference>
<dbReference type="PIR" id="PQ0499">
    <property type="entry name" value="PQ0499"/>
</dbReference>
<dbReference type="GO" id="GO:0042025">
    <property type="term" value="C:host cell nucleus"/>
    <property type="evidence" value="ECO:0007669"/>
    <property type="project" value="UniProtKB-SubCell"/>
</dbReference>
<dbReference type="GO" id="GO:0019028">
    <property type="term" value="C:viral capsid"/>
    <property type="evidence" value="ECO:0007669"/>
    <property type="project" value="UniProtKB-KW"/>
</dbReference>
<dbReference type="GO" id="GO:0031423">
    <property type="term" value="F:hexon binding"/>
    <property type="evidence" value="ECO:0007669"/>
    <property type="project" value="InterPro"/>
</dbReference>
<dbReference type="InterPro" id="IPR000646">
    <property type="entry name" value="Adeno_PVIII"/>
</dbReference>
<dbReference type="Pfam" id="PF01310">
    <property type="entry name" value="Adeno_PVIII"/>
    <property type="match status" value="1"/>
</dbReference>
<keyword id="KW-0167">Capsid protein</keyword>
<keyword id="KW-1048">Host nucleus</keyword>
<keyword id="KW-0426">Late protein</keyword>
<keyword id="KW-0946">Virion</keyword>
<organismHost>
    <name type="scientific">Bos taurus</name>
    <name type="common">Bovine</name>
    <dbReference type="NCBI Taxonomy" id="9913"/>
</organismHost>
<reference key="1">
    <citation type="journal article" date="1992" name="J. Gen. Virol.">
        <title>Sequence analysis of bovine adenovirus type 3 early region 3 and fibre protein genes.</title>
        <authorList>
            <person name="Mittal S.K."/>
            <person name="Prevec L."/>
            <person name="Babiuk L.A."/>
            <person name="Graham F.L."/>
        </authorList>
    </citation>
    <scope>NUCLEOTIDE SEQUENCE [GENOMIC DNA]</scope>
</reference>
<reference key="2">
    <citation type="journal article" date="1993" name="J. Gen. Virol.">
        <title>Sequence analysis of bovine adenovirus type 3 early region 3 and fibre protein genes.</title>
        <authorList>
            <person name="Mittal S.K."/>
            <person name="Prevec L."/>
            <person name="Babiuk L.A."/>
            <person name="Graham F.L."/>
        </authorList>
    </citation>
    <scope>NUCLEOTIDE SEQUENCE [GENOMIC DNA]</scope>
</reference>
<feature type="chain" id="PRO_0000421406" description="Pre-hexon-linking protein VIII">
    <location>
        <begin position="1" status="less than"/>
        <end position="139"/>
    </location>
</feature>
<feature type="peptide" id="PRO_0000421407" description="Hexon-linking protein-N" evidence="3">
    <location>
        <begin position="1"/>
        <end position="34"/>
    </location>
</feature>
<feature type="propeptide" id="PRO_0000421408" evidence="3">
    <location>
        <begin position="35"/>
        <end position="69"/>
    </location>
</feature>
<feature type="peptide" id="PRO_0000221842" description="Hexon-linking protein-C">
    <location>
        <begin position="70"/>
        <end position="139"/>
    </location>
</feature>
<feature type="site" description="Cleavage; by viral protease" evidence="3">
    <location>
        <begin position="34"/>
        <end position="35"/>
    </location>
</feature>
<feature type="non-terminal residue">
    <location>
        <position position="1"/>
    </location>
</feature>
<name>CAP8_ADEB3</name>
<protein>
    <recommendedName>
        <fullName>Pre-hexon-linking protein VIII</fullName>
    </recommendedName>
    <alternativeName>
        <fullName>Pre-protein VIII</fullName>
        <shortName>pVIII</shortName>
    </alternativeName>
    <component>
        <recommendedName>
            <fullName>Hexon-linking protein-N</fullName>
        </recommendedName>
        <alternativeName>
            <fullName>12.1 kDa protein VIII</fullName>
        </alternativeName>
        <alternativeName>
            <fullName>Protein VIII-N</fullName>
        </alternativeName>
    </component>
    <component>
        <recommendedName>
            <fullName>Hexon-linking protein-C</fullName>
        </recommendedName>
        <alternativeName>
            <fullName>7.6 kDa protein VIII</fullName>
        </alternativeName>
        <alternativeName>
            <fullName>Protein VIII-C</fullName>
        </alternativeName>
    </component>
</protein>
<comment type="function">
    <molecule>Hexon-linking protein-N</molecule>
    <text evidence="2">Structural component of the virion that acts as a cement protein on the capsid interior and which glue the peripentonal hexons and group-of-nine hexons together.</text>
</comment>
<comment type="function">
    <molecule>Hexon-linking protein-C</molecule>
    <text evidence="2">Structural component of the virion that acts as a cement protein on the capsid interior and which glue the peripentonal hexons and group-of-nine hexons together.</text>
</comment>
<comment type="subunit">
    <text evidence="2">Interacts with the peripentonal hexons as well as the hexons in the facets. Part of a complex composed of the core-capsid bridging protein, the endosome lysis protein VI and the hexon-linking protein VIII; these interactions bridge the virus core to the capsid.</text>
</comment>
<comment type="subcellular location">
    <molecule>Pre-hexon-linking protein VIII</molecule>
    <subcellularLocation>
        <location evidence="2">Host nucleus</location>
    </subcellularLocation>
</comment>
<comment type="subcellular location">
    <molecule>Hexon-linking protein-N</molecule>
    <subcellularLocation>
        <location evidence="2">Virion</location>
    </subcellularLocation>
    <text evidence="2">Located on the inner side of the capsid shell. Present in 120 copies per virion.</text>
</comment>
<comment type="subcellular location">
    <molecule>Hexon-linking protein-C</molecule>
    <subcellularLocation>
        <location evidence="2">Virion</location>
    </subcellularLocation>
    <text evidence="2">Located on the inner side of the capsid shell. Present in 120 copies per virion.</text>
</comment>
<comment type="induction">
    <text>Expressed in the late phase of the viral replicative cycle.</text>
</comment>
<comment type="PTM">
    <text evidence="2">Cleaved by the viral protease during virion maturation. May cause the middle segment to be shed from the capsid.</text>
</comment>
<comment type="miscellaneous">
    <text evidence="1">All late proteins expressed from the major late promoter are produced by alternative splicing and alternative polyadenylation of the same gene giving rise to non-overlapping ORFs. A leader sequence is present in the N-terminus of all these mRNAs and is recognized by the viral shutoff protein to provide expression although conventional translation via ribosome scanning from the cap has been shut off in the host cell (By similarity).</text>
</comment>
<comment type="similarity">
    <text evidence="4">Belongs to the adenoviridae hexon-linking protein family.</text>
</comment>